<gene>
    <name evidence="1" type="primary">hflD</name>
    <name type="ordered locus">Csal_2445</name>
</gene>
<protein>
    <recommendedName>
        <fullName evidence="1">High frequency lysogenization protein HflD homolog</fullName>
    </recommendedName>
</protein>
<name>HFLD_CHRSD</name>
<evidence type="ECO:0000255" key="1">
    <source>
        <dbReference type="HAMAP-Rule" id="MF_00695"/>
    </source>
</evidence>
<feature type="chain" id="PRO_0000390637" description="High frequency lysogenization protein HflD homolog">
    <location>
        <begin position="1"/>
        <end position="214"/>
    </location>
</feature>
<accession>Q1QUR6</accession>
<reference key="1">
    <citation type="journal article" date="2011" name="Stand. Genomic Sci.">
        <title>Complete genome sequence of the halophilic and highly halotolerant Chromohalobacter salexigens type strain (1H11(T)).</title>
        <authorList>
            <person name="Copeland A."/>
            <person name="O'Connor K."/>
            <person name="Lucas S."/>
            <person name="Lapidus A."/>
            <person name="Berry K.W."/>
            <person name="Detter J.C."/>
            <person name="Del Rio T.G."/>
            <person name="Hammon N."/>
            <person name="Dalin E."/>
            <person name="Tice H."/>
            <person name="Pitluck S."/>
            <person name="Bruce D."/>
            <person name="Goodwin L."/>
            <person name="Han C."/>
            <person name="Tapia R."/>
            <person name="Saunders E."/>
            <person name="Schmutz J."/>
            <person name="Brettin T."/>
            <person name="Larimer F."/>
            <person name="Land M."/>
            <person name="Hauser L."/>
            <person name="Vargas C."/>
            <person name="Nieto J.J."/>
            <person name="Kyrpides N.C."/>
            <person name="Ivanova N."/>
            <person name="Goker M."/>
            <person name="Klenk H.P."/>
            <person name="Csonka L.N."/>
            <person name="Woyke T."/>
        </authorList>
    </citation>
    <scope>NUCLEOTIDE SEQUENCE [LARGE SCALE GENOMIC DNA]</scope>
    <source>
        <strain>ATCC BAA-138 / DSM 3043 / CIP 106854 / NCIMB 13768 / 1H11</strain>
    </source>
</reference>
<comment type="subcellular location">
    <subcellularLocation>
        <location>Cytoplasm</location>
    </subcellularLocation>
    <subcellularLocation>
        <location evidence="1">Cell inner membrane</location>
        <topology evidence="1">Peripheral membrane protein</topology>
        <orientation evidence="1">Cytoplasmic side</orientation>
    </subcellularLocation>
</comment>
<comment type="similarity">
    <text evidence="1">Belongs to the HflD family.</text>
</comment>
<organism>
    <name type="scientific">Chromohalobacter salexigens (strain ATCC BAA-138 / DSM 3043 / CIP 106854 / NCIMB 13768 / 1H11)</name>
    <dbReference type="NCBI Taxonomy" id="290398"/>
    <lineage>
        <taxon>Bacteria</taxon>
        <taxon>Pseudomonadati</taxon>
        <taxon>Pseudomonadota</taxon>
        <taxon>Gammaproteobacteria</taxon>
        <taxon>Oceanospirillales</taxon>
        <taxon>Halomonadaceae</taxon>
        <taxon>Chromohalobacter</taxon>
    </lineage>
</organism>
<proteinExistence type="inferred from homology"/>
<sequence length="214" mass="23863">MTPTPIQNAPQSAVTRQALALAGVFQAAAVVDQLARTGQCDERAWNTLIRATLDTNPDSFATIYGGHHNNLRLGIDTLSAVMNRQHSDPAVMRYGFSLVLLMQKLRKDDAMMASLGERLTRIQGQAEHFGDTHENVIASLGQLYQDTLSTFRYRIVVQGDPSLLQSRMMPERVRAALLTGVRFALLWHQQGGRRWKLLFQRQGIKKSLAALDGH</sequence>
<dbReference type="EMBL" id="CP000285">
    <property type="protein sequence ID" value="ABE59792.1"/>
    <property type="molecule type" value="Genomic_DNA"/>
</dbReference>
<dbReference type="RefSeq" id="WP_011507738.1">
    <property type="nucleotide sequence ID" value="NC_007963.1"/>
</dbReference>
<dbReference type="SMR" id="Q1QUR6"/>
<dbReference type="STRING" id="290398.Csal_2445"/>
<dbReference type="GeneID" id="95335151"/>
<dbReference type="KEGG" id="csa:Csal_2445"/>
<dbReference type="eggNOG" id="COG2915">
    <property type="taxonomic scope" value="Bacteria"/>
</dbReference>
<dbReference type="HOGENOM" id="CLU_098920_0_0_6"/>
<dbReference type="OrthoDB" id="9788031at2"/>
<dbReference type="Proteomes" id="UP000000239">
    <property type="component" value="Chromosome"/>
</dbReference>
<dbReference type="GO" id="GO:0005737">
    <property type="term" value="C:cytoplasm"/>
    <property type="evidence" value="ECO:0007669"/>
    <property type="project" value="UniProtKB-SubCell"/>
</dbReference>
<dbReference type="GO" id="GO:0005886">
    <property type="term" value="C:plasma membrane"/>
    <property type="evidence" value="ECO:0007669"/>
    <property type="project" value="UniProtKB-SubCell"/>
</dbReference>
<dbReference type="Gene3D" id="1.10.3890.10">
    <property type="entry name" value="HflD-like"/>
    <property type="match status" value="1"/>
</dbReference>
<dbReference type="HAMAP" id="MF_00695">
    <property type="entry name" value="HflD_protein"/>
    <property type="match status" value="1"/>
</dbReference>
<dbReference type="InterPro" id="IPR007451">
    <property type="entry name" value="HflD"/>
</dbReference>
<dbReference type="InterPro" id="IPR035932">
    <property type="entry name" value="HflD-like_sf"/>
</dbReference>
<dbReference type="NCBIfam" id="NF001246">
    <property type="entry name" value="PRK00218.1-2"/>
    <property type="match status" value="1"/>
</dbReference>
<dbReference type="PANTHER" id="PTHR38100">
    <property type="entry name" value="HIGH FREQUENCY LYSOGENIZATION PROTEIN HFLD"/>
    <property type="match status" value="1"/>
</dbReference>
<dbReference type="PANTHER" id="PTHR38100:SF1">
    <property type="entry name" value="HIGH FREQUENCY LYSOGENIZATION PROTEIN HFLD"/>
    <property type="match status" value="1"/>
</dbReference>
<dbReference type="Pfam" id="PF04356">
    <property type="entry name" value="DUF489"/>
    <property type="match status" value="1"/>
</dbReference>
<dbReference type="SUPFAM" id="SSF101322">
    <property type="entry name" value="YcfC-like"/>
    <property type="match status" value="1"/>
</dbReference>
<keyword id="KW-0997">Cell inner membrane</keyword>
<keyword id="KW-1003">Cell membrane</keyword>
<keyword id="KW-0963">Cytoplasm</keyword>
<keyword id="KW-0472">Membrane</keyword>
<keyword id="KW-1185">Reference proteome</keyword>